<proteinExistence type="inferred from homology"/>
<evidence type="ECO:0000250" key="1"/>
<evidence type="ECO:0000255" key="2"/>
<evidence type="ECO:0000305" key="3"/>
<name>AXE1_ASPNC</name>
<reference key="1">
    <citation type="journal article" date="2007" name="Nat. Biotechnol.">
        <title>Genome sequencing and analysis of the versatile cell factory Aspergillus niger CBS 513.88.</title>
        <authorList>
            <person name="Pel H.J."/>
            <person name="de Winde J.H."/>
            <person name="Archer D.B."/>
            <person name="Dyer P.S."/>
            <person name="Hofmann G."/>
            <person name="Schaap P.J."/>
            <person name="Turner G."/>
            <person name="de Vries R.P."/>
            <person name="Albang R."/>
            <person name="Albermann K."/>
            <person name="Andersen M.R."/>
            <person name="Bendtsen J.D."/>
            <person name="Benen J.A.E."/>
            <person name="van den Berg M."/>
            <person name="Breestraat S."/>
            <person name="Caddick M.X."/>
            <person name="Contreras R."/>
            <person name="Cornell M."/>
            <person name="Coutinho P.M."/>
            <person name="Danchin E.G.J."/>
            <person name="Debets A.J.M."/>
            <person name="Dekker P."/>
            <person name="van Dijck P.W.M."/>
            <person name="van Dijk A."/>
            <person name="Dijkhuizen L."/>
            <person name="Driessen A.J.M."/>
            <person name="d'Enfert C."/>
            <person name="Geysens S."/>
            <person name="Goosen C."/>
            <person name="Groot G.S.P."/>
            <person name="de Groot P.W.J."/>
            <person name="Guillemette T."/>
            <person name="Henrissat B."/>
            <person name="Herweijer M."/>
            <person name="van den Hombergh J.P.T.W."/>
            <person name="van den Hondel C.A.M.J.J."/>
            <person name="van der Heijden R.T.J.M."/>
            <person name="van der Kaaij R.M."/>
            <person name="Klis F.M."/>
            <person name="Kools H.J."/>
            <person name="Kubicek C.P."/>
            <person name="van Kuyk P.A."/>
            <person name="Lauber J."/>
            <person name="Lu X."/>
            <person name="van der Maarel M.J.E.C."/>
            <person name="Meulenberg R."/>
            <person name="Menke H."/>
            <person name="Mortimer M.A."/>
            <person name="Nielsen J."/>
            <person name="Oliver S.G."/>
            <person name="Olsthoorn M."/>
            <person name="Pal K."/>
            <person name="van Peij N.N.M.E."/>
            <person name="Ram A.F.J."/>
            <person name="Rinas U."/>
            <person name="Roubos J.A."/>
            <person name="Sagt C.M.J."/>
            <person name="Schmoll M."/>
            <person name="Sun J."/>
            <person name="Ussery D."/>
            <person name="Varga J."/>
            <person name="Vervecken W."/>
            <person name="van de Vondervoort P.J.J."/>
            <person name="Wedler H."/>
            <person name="Woesten H.A.B."/>
            <person name="Zeng A.-P."/>
            <person name="van Ooyen A.J.J."/>
            <person name="Visser J."/>
            <person name="Stam H."/>
        </authorList>
    </citation>
    <scope>NUCLEOTIDE SEQUENCE [LARGE SCALE GENOMIC DNA]</scope>
    <source>
        <strain>ATCC MYA-4892 / CBS 513.88 / FGSC A1513</strain>
    </source>
</reference>
<accession>A2QZI3</accession>
<sequence length="303" mass="32625">MLSTHLLFLATTLLTSLFHPIAAHVAKRSGSLQQITDFGDNPTGVGMYIYVPNNLASNPGIVVAIHYCTGTGPGYYSNSFYATLSEQYGFIVIYPSSPYSGGCWDVSSQATLTHNGGGNSNSIANMVTWTISEYGADSKKVFVTGSSSGAMMTNVMAATYPELFAAGTVYSGVSAGCFYSDTNQVDGWNSTCAQGDVITTPEHWASIAEAMYPGYSGSRPKMQIYHGSVDTTLYPQNYYETCKQWAGVFGYDYSAPESTEANTPQTNYETTIWGDNLQGIFATGVGHTVPIHGDKDMEWFGFA</sequence>
<protein>
    <recommendedName>
        <fullName>Probable acetylxylan esterase A</fullName>
        <ecNumber>3.1.1.72</ecNumber>
    </recommendedName>
</protein>
<dbReference type="EC" id="3.1.1.72"/>
<dbReference type="EMBL" id="AM270272">
    <property type="protein sequence ID" value="CAK46215.1"/>
    <property type="molecule type" value="Genomic_DNA"/>
</dbReference>
<dbReference type="RefSeq" id="XP_001395572.1">
    <property type="nucleotide sequence ID" value="XM_001395535.2"/>
</dbReference>
<dbReference type="SMR" id="A2QZI3"/>
<dbReference type="ESTHER" id="aspnc-axe1">
    <property type="family name" value="Esterase_phb"/>
</dbReference>
<dbReference type="GlyCosmos" id="A2QZI3">
    <property type="glycosylation" value="1 site, No reported glycans"/>
</dbReference>
<dbReference type="EnsemblFungi" id="CAK46215">
    <property type="protein sequence ID" value="CAK46215"/>
    <property type="gene ID" value="An12g05010"/>
</dbReference>
<dbReference type="GeneID" id="4985851"/>
<dbReference type="KEGG" id="ang:An12g05010"/>
<dbReference type="VEuPathDB" id="FungiDB:An12g05010"/>
<dbReference type="HOGENOM" id="CLU_027551_1_1_1"/>
<dbReference type="BRENDA" id="3.1.1.72">
    <property type="organism ID" value="518"/>
</dbReference>
<dbReference type="UniPathway" id="UPA00114"/>
<dbReference type="Proteomes" id="UP000006706">
    <property type="component" value="Chromosome 3L"/>
</dbReference>
<dbReference type="GO" id="GO:0005576">
    <property type="term" value="C:extracellular region"/>
    <property type="evidence" value="ECO:0007669"/>
    <property type="project" value="UniProtKB-SubCell"/>
</dbReference>
<dbReference type="GO" id="GO:0046555">
    <property type="term" value="F:acetylxylan esterase activity"/>
    <property type="evidence" value="ECO:0007669"/>
    <property type="project" value="UniProtKB-EC"/>
</dbReference>
<dbReference type="GO" id="GO:0030245">
    <property type="term" value="P:cellulose catabolic process"/>
    <property type="evidence" value="ECO:0007669"/>
    <property type="project" value="UniProtKB-KW"/>
</dbReference>
<dbReference type="GO" id="GO:0045493">
    <property type="term" value="P:xylan catabolic process"/>
    <property type="evidence" value="ECO:0007669"/>
    <property type="project" value="UniProtKB-UniPathway"/>
</dbReference>
<dbReference type="Gene3D" id="3.40.50.1820">
    <property type="entry name" value="alpha/beta hydrolase"/>
    <property type="match status" value="1"/>
</dbReference>
<dbReference type="InterPro" id="IPR029058">
    <property type="entry name" value="AB_hydrolase_fold"/>
</dbReference>
<dbReference type="InterPro" id="IPR010126">
    <property type="entry name" value="Esterase_phb"/>
</dbReference>
<dbReference type="InterPro" id="IPR050955">
    <property type="entry name" value="Plant_Biomass_Hydrol_Est"/>
</dbReference>
<dbReference type="NCBIfam" id="TIGR01840">
    <property type="entry name" value="esterase_phb"/>
    <property type="match status" value="1"/>
</dbReference>
<dbReference type="PANTHER" id="PTHR43037:SF3">
    <property type="entry name" value="FERULOYL ESTERASE B"/>
    <property type="match status" value="1"/>
</dbReference>
<dbReference type="PANTHER" id="PTHR43037">
    <property type="entry name" value="UNNAMED PRODUCT-RELATED"/>
    <property type="match status" value="1"/>
</dbReference>
<dbReference type="Pfam" id="PF10503">
    <property type="entry name" value="Esterase_PHB"/>
    <property type="match status" value="1"/>
</dbReference>
<dbReference type="SUPFAM" id="SSF53474">
    <property type="entry name" value="alpha/beta-Hydrolases"/>
    <property type="match status" value="2"/>
</dbReference>
<organism>
    <name type="scientific">Aspergillus niger (strain ATCC MYA-4892 / CBS 513.88 / FGSC A1513)</name>
    <dbReference type="NCBI Taxonomy" id="425011"/>
    <lineage>
        <taxon>Eukaryota</taxon>
        <taxon>Fungi</taxon>
        <taxon>Dikarya</taxon>
        <taxon>Ascomycota</taxon>
        <taxon>Pezizomycotina</taxon>
        <taxon>Eurotiomycetes</taxon>
        <taxon>Eurotiomycetidae</taxon>
        <taxon>Eurotiales</taxon>
        <taxon>Aspergillaceae</taxon>
        <taxon>Aspergillus</taxon>
        <taxon>Aspergillus subgen. Circumdati</taxon>
    </lineage>
</organism>
<comment type="function">
    <text evidence="1">Acetylxylan esterase involved in the hydrolysis of xylan, a major structural heterogeneous polysaccharide found in plant biomass representing the second most abundant polysaccharide in the biosphere, after cellulose. Degrades acetylated xylans by cleaving acetyl side groups from the hetero-xylan backbone (By similarity).</text>
</comment>
<comment type="catalytic activity">
    <reaction>
        <text>Deacetylation of xylans and xylo-oligosaccharides.</text>
        <dbReference type="EC" id="3.1.1.72"/>
    </reaction>
</comment>
<comment type="pathway">
    <text>Glycan degradation; xylan degradation.</text>
</comment>
<comment type="subunit">
    <text evidence="1">Monomer.</text>
</comment>
<comment type="subcellular location">
    <subcellularLocation>
        <location evidence="1">Secreted</location>
    </subcellularLocation>
</comment>
<comment type="similarity">
    <text evidence="3">Belongs to the carbohydrate esterase 1 (CE1) family. AxeA subfamily.</text>
</comment>
<comment type="caution">
    <text evidence="3">The C-terminal carbohydrate-binding module (CBM) extension found in some acetylxylan esterases from other species is absent.</text>
</comment>
<feature type="signal peptide" evidence="2">
    <location>
        <begin position="1"/>
        <end position="23"/>
    </location>
</feature>
<feature type="chain" id="PRO_5000220742" description="Probable acetylxylan esterase A">
    <location>
        <begin position="24"/>
        <end position="303"/>
    </location>
</feature>
<feature type="active site" description="Charge relay system" evidence="1">
    <location>
        <position position="147"/>
    </location>
</feature>
<feature type="glycosylation site" description="N-linked (GlcNAc...) asparagine" evidence="2">
    <location>
        <position position="189"/>
    </location>
</feature>
<keyword id="KW-0119">Carbohydrate metabolism</keyword>
<keyword id="KW-0136">Cellulose degradation</keyword>
<keyword id="KW-0325">Glycoprotein</keyword>
<keyword id="KW-0378">Hydrolase</keyword>
<keyword id="KW-0624">Polysaccharide degradation</keyword>
<keyword id="KW-1185">Reference proteome</keyword>
<keyword id="KW-0964">Secreted</keyword>
<keyword id="KW-0719">Serine esterase</keyword>
<keyword id="KW-0732">Signal</keyword>
<gene>
    <name type="primary">axeA</name>
    <name type="synonym">aceA</name>
    <name type="ORF">An12g05010</name>
</gene>